<comment type="function">
    <text evidence="1">Converts seryl-tRNA(Sec) to selenocysteinyl-tRNA(Sec) required for selenoprotein biosynthesis.</text>
</comment>
<comment type="catalytic activity">
    <reaction evidence="1">
        <text>L-seryl-tRNA(Sec) + selenophosphate + H(+) = L-selenocysteinyl-tRNA(Sec) + phosphate</text>
        <dbReference type="Rhea" id="RHEA:22728"/>
        <dbReference type="Rhea" id="RHEA-COMP:9742"/>
        <dbReference type="Rhea" id="RHEA-COMP:9743"/>
        <dbReference type="ChEBI" id="CHEBI:15378"/>
        <dbReference type="ChEBI" id="CHEBI:16144"/>
        <dbReference type="ChEBI" id="CHEBI:43474"/>
        <dbReference type="ChEBI" id="CHEBI:78533"/>
        <dbReference type="ChEBI" id="CHEBI:78573"/>
        <dbReference type="EC" id="2.9.1.1"/>
    </reaction>
</comment>
<comment type="cofactor">
    <cofactor evidence="1">
        <name>pyridoxal 5'-phosphate</name>
        <dbReference type="ChEBI" id="CHEBI:597326"/>
    </cofactor>
</comment>
<comment type="pathway">
    <text evidence="1">Aminoacyl-tRNA biosynthesis; selenocysteinyl-tRNA(Sec) biosynthesis; selenocysteinyl-tRNA(Sec) from L-seryl-tRNA(Sec) (bacterial route): step 1/1.</text>
</comment>
<comment type="subcellular location">
    <subcellularLocation>
        <location evidence="1">Cytoplasm</location>
    </subcellularLocation>
</comment>
<comment type="similarity">
    <text evidence="1">Belongs to the SelA family.</text>
</comment>
<keyword id="KW-0963">Cytoplasm</keyword>
<keyword id="KW-0648">Protein biosynthesis</keyword>
<keyword id="KW-0663">Pyridoxal phosphate</keyword>
<keyword id="KW-1185">Reference proteome</keyword>
<keyword id="KW-0711">Selenium</keyword>
<keyword id="KW-0808">Transferase</keyword>
<proteinExistence type="inferred from homology"/>
<gene>
    <name evidence="1" type="primary">selA</name>
    <name type="ordered locus">DVU_2883</name>
</gene>
<evidence type="ECO:0000255" key="1">
    <source>
        <dbReference type="HAMAP-Rule" id="MF_00423"/>
    </source>
</evidence>
<organism>
    <name type="scientific">Nitratidesulfovibrio vulgaris (strain ATCC 29579 / DSM 644 / CCUG 34227 / NCIMB 8303 / VKM B-1760 / Hildenborough)</name>
    <name type="common">Desulfovibrio vulgaris</name>
    <dbReference type="NCBI Taxonomy" id="882"/>
    <lineage>
        <taxon>Bacteria</taxon>
        <taxon>Pseudomonadati</taxon>
        <taxon>Thermodesulfobacteriota</taxon>
        <taxon>Desulfovibrionia</taxon>
        <taxon>Desulfovibrionales</taxon>
        <taxon>Desulfovibrionaceae</taxon>
        <taxon>Nitratidesulfovibrio</taxon>
    </lineage>
</organism>
<accession>P61735</accession>
<reference key="1">
    <citation type="journal article" date="2004" name="Nat. Biotechnol.">
        <title>The genome sequence of the anaerobic, sulfate-reducing bacterium Desulfovibrio vulgaris Hildenborough.</title>
        <authorList>
            <person name="Heidelberg J.F."/>
            <person name="Seshadri R."/>
            <person name="Haveman S.A."/>
            <person name="Hemme C.L."/>
            <person name="Paulsen I.T."/>
            <person name="Kolonay J.F."/>
            <person name="Eisen J.A."/>
            <person name="Ward N.L."/>
            <person name="Methe B.A."/>
            <person name="Brinkac L.M."/>
            <person name="Daugherty S.C."/>
            <person name="DeBoy R.T."/>
            <person name="Dodson R.J."/>
            <person name="Durkin A.S."/>
            <person name="Madupu R."/>
            <person name="Nelson W.C."/>
            <person name="Sullivan S.A."/>
            <person name="Fouts D.E."/>
            <person name="Haft D.H."/>
            <person name="Selengut J."/>
            <person name="Peterson J.D."/>
            <person name="Davidsen T.M."/>
            <person name="Zafar N."/>
            <person name="Zhou L."/>
            <person name="Radune D."/>
            <person name="Dimitrov G."/>
            <person name="Hance M."/>
            <person name="Tran K."/>
            <person name="Khouri H.M."/>
            <person name="Gill J."/>
            <person name="Utterback T.R."/>
            <person name="Feldblyum T.V."/>
            <person name="Wall J.D."/>
            <person name="Voordouw G."/>
            <person name="Fraser C.M."/>
        </authorList>
    </citation>
    <scope>NUCLEOTIDE SEQUENCE [LARGE SCALE GENOMIC DNA]</scope>
    <source>
        <strain>ATCC 29579 / DSM 644 / CCUG 34227 / NCIMB 8303 / VKM B-1760 / Hildenborough</strain>
    </source>
</reference>
<sequence>MNRLFRALPSVDALLTALTTPTHGHDTFADLPRALLRDLVNDFLDARREDIRQGRIDAPESLAAERLLPSLVQSVGRRSRAHFRRVLNGTGVVIHTNLGRSLLAPAATEAVAAACAHYSNLEFDLDTGERGSRYSHVEQLLCRVTGAEAGLVVNNNAAAVLLVLDTLCKGGEVVVSRGQLVEIGGSFRIPDVMEKSGATLREVGATNRTHLRDYENAINEKTVALLRVHTSNYRVVGFHKEVPLDELVALGRARDLPVIEDLGSGSFLDFTPWGLPGEPTVQSVVGAGPDVITFSGDKVLGGPQAGLIVGRRQWIDRIKRNPLNRALRIDKMTLAALEATLRLYLDPERARNEVPTLRMMTASPDELARRARRLAARLRKALGDAARVGTVPGVSRVGGGSFPERDLPTTLVEVAPASCTATVLKTRLLDTDPPLVGRLENDTFRLDPRTLDDVEFAPVATALRQALGL</sequence>
<dbReference type="EC" id="2.9.1.1" evidence="1"/>
<dbReference type="EMBL" id="AE017285">
    <property type="protein sequence ID" value="AAS97355.1"/>
    <property type="molecule type" value="Genomic_DNA"/>
</dbReference>
<dbReference type="RefSeq" id="YP_012095.1">
    <property type="nucleotide sequence ID" value="NC_002937.3"/>
</dbReference>
<dbReference type="SMR" id="P61735"/>
<dbReference type="STRING" id="882.DVU_2883"/>
<dbReference type="PaxDb" id="882-DVU_2883"/>
<dbReference type="EnsemblBacteria" id="AAS97355">
    <property type="protein sequence ID" value="AAS97355"/>
    <property type="gene ID" value="DVU_2883"/>
</dbReference>
<dbReference type="KEGG" id="dvu:DVU_2883"/>
<dbReference type="PATRIC" id="fig|882.5.peg.2604"/>
<dbReference type="eggNOG" id="COG1921">
    <property type="taxonomic scope" value="Bacteria"/>
</dbReference>
<dbReference type="HOGENOM" id="CLU_038142_1_0_7"/>
<dbReference type="OrthoDB" id="9787096at2"/>
<dbReference type="PhylomeDB" id="P61735"/>
<dbReference type="UniPathway" id="UPA00906">
    <property type="reaction ID" value="UER00896"/>
</dbReference>
<dbReference type="Proteomes" id="UP000002194">
    <property type="component" value="Chromosome"/>
</dbReference>
<dbReference type="GO" id="GO:0005737">
    <property type="term" value="C:cytoplasm"/>
    <property type="evidence" value="ECO:0007669"/>
    <property type="project" value="UniProtKB-SubCell"/>
</dbReference>
<dbReference type="GO" id="GO:0004125">
    <property type="term" value="F:L-seryl-tRNA(Sec) selenium transferase activity"/>
    <property type="evidence" value="ECO:0007669"/>
    <property type="project" value="UniProtKB-UniRule"/>
</dbReference>
<dbReference type="GO" id="GO:0001717">
    <property type="term" value="P:conversion of seryl-tRNAsec to selenocys-tRNAsec"/>
    <property type="evidence" value="ECO:0007669"/>
    <property type="project" value="UniProtKB-UniRule"/>
</dbReference>
<dbReference type="GO" id="GO:0001514">
    <property type="term" value="P:selenocysteine incorporation"/>
    <property type="evidence" value="ECO:0007669"/>
    <property type="project" value="UniProtKB-UniRule"/>
</dbReference>
<dbReference type="Gene3D" id="3.90.1150.180">
    <property type="match status" value="1"/>
</dbReference>
<dbReference type="Gene3D" id="3.40.640.10">
    <property type="entry name" value="Type I PLP-dependent aspartate aminotransferase-like (Major domain)"/>
    <property type="match status" value="1"/>
</dbReference>
<dbReference type="HAMAP" id="MF_00423">
    <property type="entry name" value="SelA"/>
    <property type="match status" value="1"/>
</dbReference>
<dbReference type="InterPro" id="IPR015424">
    <property type="entry name" value="PyrdxlP-dep_Trfase"/>
</dbReference>
<dbReference type="InterPro" id="IPR015421">
    <property type="entry name" value="PyrdxlP-dep_Trfase_major"/>
</dbReference>
<dbReference type="InterPro" id="IPR018319">
    <property type="entry name" value="SelA-like"/>
</dbReference>
<dbReference type="InterPro" id="IPR004534">
    <property type="entry name" value="SelA_trans"/>
</dbReference>
<dbReference type="InterPro" id="IPR025862">
    <property type="entry name" value="SelA_trans_N_dom"/>
</dbReference>
<dbReference type="NCBIfam" id="TIGR00474">
    <property type="entry name" value="selA"/>
    <property type="match status" value="1"/>
</dbReference>
<dbReference type="PANTHER" id="PTHR32328">
    <property type="entry name" value="L-SERYL-TRNA(SEC) SELENIUM TRANSFERASE"/>
    <property type="match status" value="1"/>
</dbReference>
<dbReference type="PANTHER" id="PTHR32328:SF0">
    <property type="entry name" value="L-SERYL-TRNA(SEC) SELENIUM TRANSFERASE"/>
    <property type="match status" value="1"/>
</dbReference>
<dbReference type="Pfam" id="PF12390">
    <property type="entry name" value="Se-cys_synth_N"/>
    <property type="match status" value="1"/>
</dbReference>
<dbReference type="Pfam" id="PF03841">
    <property type="entry name" value="SelA"/>
    <property type="match status" value="1"/>
</dbReference>
<dbReference type="SUPFAM" id="SSF53383">
    <property type="entry name" value="PLP-dependent transferases"/>
    <property type="match status" value="1"/>
</dbReference>
<name>SELA_NITV2</name>
<protein>
    <recommendedName>
        <fullName evidence="1">L-seryl-tRNA(Sec) selenium transferase</fullName>
        <ecNumber evidence="1">2.9.1.1</ecNumber>
    </recommendedName>
    <alternativeName>
        <fullName evidence="1">Selenocysteine synthase</fullName>
        <shortName evidence="1">Sec synthase</shortName>
    </alternativeName>
    <alternativeName>
        <fullName evidence="1">Selenocysteinyl-tRNA(Sec) synthase</fullName>
    </alternativeName>
</protein>
<feature type="chain" id="PRO_0000189598" description="L-seryl-tRNA(Sec) selenium transferase">
    <location>
        <begin position="1"/>
        <end position="469"/>
    </location>
</feature>
<feature type="modified residue" description="N6-(pyridoxal phosphate)lysine" evidence="1">
    <location>
        <position position="298"/>
    </location>
</feature>